<keyword id="KW-0414">Isoprene biosynthesis</keyword>
<keyword id="KW-0464">Manganese</keyword>
<keyword id="KW-0479">Metal-binding</keyword>
<keyword id="KW-0521">NADP</keyword>
<keyword id="KW-0560">Oxidoreductase</keyword>
<sequence>MKKQIAILGSTGSIGTQALQVIEEHPDLYEVYALTANNRVDLLVEQARKFMPEAVVIANEEKYLQLKEALSDLPVKVYAGADALSQIVESQPIDIVLASMVGYAGLRPTINAIKAGKAIALANKETLVVAGELINALANQYHTPVLPVDSEHSAIFQCLEINNRLEKVILTASGGPFRTYTMEQLQTVTKAQALKHPNWEMGAKITIDSASMMNKGFEVIEAKWLFGMRPEQIEVVVHPQSVIHSMVQFEDGAVKAQLGMPDMRLPIQYAFSYPERVKSSFERLDFARITDLTFEQPDTKRFRNLALAYEALYRAGNMPCIVNAANEVVVDAFLKDKISFLGMSDVIEQTMGKVAYIKEPTYEDYVDTDAEARRVALSLLSS</sequence>
<accession>A6L0W8</accession>
<reference key="1">
    <citation type="journal article" date="2007" name="PLoS Biol.">
        <title>Evolution of symbiotic bacteria in the distal human intestine.</title>
        <authorList>
            <person name="Xu J."/>
            <person name="Mahowald M.A."/>
            <person name="Ley R.E."/>
            <person name="Lozupone C.A."/>
            <person name="Hamady M."/>
            <person name="Martens E.C."/>
            <person name="Henrissat B."/>
            <person name="Coutinho P.M."/>
            <person name="Minx P."/>
            <person name="Latreille P."/>
            <person name="Cordum H."/>
            <person name="Van Brunt A."/>
            <person name="Kim K."/>
            <person name="Fulton R.S."/>
            <person name="Fulton L.A."/>
            <person name="Clifton S.W."/>
            <person name="Wilson R.K."/>
            <person name="Knight R.D."/>
            <person name="Gordon J.I."/>
        </authorList>
    </citation>
    <scope>NUCLEOTIDE SEQUENCE [LARGE SCALE GENOMIC DNA]</scope>
    <source>
        <strain>ATCC 8482 / DSM 1447 / JCM 5826 / CCUG 4940 / NBRC 14291 / NCTC 11154</strain>
    </source>
</reference>
<protein>
    <recommendedName>
        <fullName evidence="1">1-deoxy-D-xylulose 5-phosphate reductoisomerase</fullName>
        <shortName evidence="1">DXP reductoisomerase</shortName>
        <ecNumber evidence="1">1.1.1.267</ecNumber>
    </recommendedName>
    <alternativeName>
        <fullName evidence="1">1-deoxyxylulose-5-phosphate reductoisomerase</fullName>
    </alternativeName>
    <alternativeName>
        <fullName evidence="1">2-C-methyl-D-erythritol 4-phosphate synthase</fullName>
    </alternativeName>
</protein>
<name>DXR_PHOV8</name>
<dbReference type="EC" id="1.1.1.267" evidence="1"/>
<dbReference type="EMBL" id="CP000139">
    <property type="protein sequence ID" value="ABR39332.1"/>
    <property type="molecule type" value="Genomic_DNA"/>
</dbReference>
<dbReference type="RefSeq" id="WP_005853614.1">
    <property type="nucleotide sequence ID" value="NZ_JANSWM010000064.1"/>
</dbReference>
<dbReference type="SMR" id="A6L0W8"/>
<dbReference type="STRING" id="435590.BVU_1651"/>
<dbReference type="PaxDb" id="435590-BVU_1651"/>
<dbReference type="GeneID" id="5302617"/>
<dbReference type="KEGG" id="bvu:BVU_1651"/>
<dbReference type="eggNOG" id="COG0743">
    <property type="taxonomic scope" value="Bacteria"/>
</dbReference>
<dbReference type="HOGENOM" id="CLU_035714_4_0_10"/>
<dbReference type="BioCyc" id="BVUL435590:G1G59-1737-MONOMER"/>
<dbReference type="UniPathway" id="UPA00056">
    <property type="reaction ID" value="UER00092"/>
</dbReference>
<dbReference type="Proteomes" id="UP000002861">
    <property type="component" value="Chromosome"/>
</dbReference>
<dbReference type="GO" id="GO:0030604">
    <property type="term" value="F:1-deoxy-D-xylulose-5-phosphate reductoisomerase activity"/>
    <property type="evidence" value="ECO:0007669"/>
    <property type="project" value="UniProtKB-UniRule"/>
</dbReference>
<dbReference type="GO" id="GO:0030145">
    <property type="term" value="F:manganese ion binding"/>
    <property type="evidence" value="ECO:0007669"/>
    <property type="project" value="TreeGrafter"/>
</dbReference>
<dbReference type="GO" id="GO:0070402">
    <property type="term" value="F:NADPH binding"/>
    <property type="evidence" value="ECO:0007669"/>
    <property type="project" value="InterPro"/>
</dbReference>
<dbReference type="GO" id="GO:0051484">
    <property type="term" value="P:isopentenyl diphosphate biosynthetic process, methylerythritol 4-phosphate pathway involved in terpenoid biosynthetic process"/>
    <property type="evidence" value="ECO:0007669"/>
    <property type="project" value="TreeGrafter"/>
</dbReference>
<dbReference type="FunFam" id="3.40.50.720:FF:000045">
    <property type="entry name" value="1-deoxy-D-xylulose 5-phosphate reductoisomerase"/>
    <property type="match status" value="1"/>
</dbReference>
<dbReference type="Gene3D" id="1.10.1740.10">
    <property type="match status" value="1"/>
</dbReference>
<dbReference type="Gene3D" id="3.40.50.720">
    <property type="entry name" value="NAD(P)-binding Rossmann-like Domain"/>
    <property type="match status" value="1"/>
</dbReference>
<dbReference type="HAMAP" id="MF_00183">
    <property type="entry name" value="DXP_reductoisom"/>
    <property type="match status" value="1"/>
</dbReference>
<dbReference type="InterPro" id="IPR003821">
    <property type="entry name" value="DXP_reductoisomerase"/>
</dbReference>
<dbReference type="InterPro" id="IPR013644">
    <property type="entry name" value="DXP_reductoisomerase_C"/>
</dbReference>
<dbReference type="InterPro" id="IPR013512">
    <property type="entry name" value="DXP_reductoisomerase_N"/>
</dbReference>
<dbReference type="InterPro" id="IPR026877">
    <property type="entry name" value="DXPR_C"/>
</dbReference>
<dbReference type="InterPro" id="IPR036169">
    <property type="entry name" value="DXPR_C_sf"/>
</dbReference>
<dbReference type="InterPro" id="IPR036291">
    <property type="entry name" value="NAD(P)-bd_dom_sf"/>
</dbReference>
<dbReference type="NCBIfam" id="TIGR00243">
    <property type="entry name" value="Dxr"/>
    <property type="match status" value="1"/>
</dbReference>
<dbReference type="NCBIfam" id="NF009114">
    <property type="entry name" value="PRK12464.1"/>
    <property type="match status" value="1"/>
</dbReference>
<dbReference type="PANTHER" id="PTHR30525">
    <property type="entry name" value="1-DEOXY-D-XYLULOSE 5-PHOSPHATE REDUCTOISOMERASE"/>
    <property type="match status" value="1"/>
</dbReference>
<dbReference type="PANTHER" id="PTHR30525:SF0">
    <property type="entry name" value="1-DEOXY-D-XYLULOSE 5-PHOSPHATE REDUCTOISOMERASE, CHLOROPLASTIC"/>
    <property type="match status" value="1"/>
</dbReference>
<dbReference type="Pfam" id="PF08436">
    <property type="entry name" value="DXP_redisom_C"/>
    <property type="match status" value="1"/>
</dbReference>
<dbReference type="Pfam" id="PF02670">
    <property type="entry name" value="DXP_reductoisom"/>
    <property type="match status" value="1"/>
</dbReference>
<dbReference type="Pfam" id="PF13288">
    <property type="entry name" value="DXPR_C"/>
    <property type="match status" value="1"/>
</dbReference>
<dbReference type="PIRSF" id="PIRSF006205">
    <property type="entry name" value="Dxp_reductismrs"/>
    <property type="match status" value="1"/>
</dbReference>
<dbReference type="SUPFAM" id="SSF69055">
    <property type="entry name" value="1-deoxy-D-xylulose-5-phosphate reductoisomerase, C-terminal domain"/>
    <property type="match status" value="1"/>
</dbReference>
<dbReference type="SUPFAM" id="SSF55347">
    <property type="entry name" value="Glyceraldehyde-3-phosphate dehydrogenase-like, C-terminal domain"/>
    <property type="match status" value="1"/>
</dbReference>
<dbReference type="SUPFAM" id="SSF51735">
    <property type="entry name" value="NAD(P)-binding Rossmann-fold domains"/>
    <property type="match status" value="1"/>
</dbReference>
<organism>
    <name type="scientific">Phocaeicola vulgatus (strain ATCC 8482 / DSM 1447 / JCM 5826 / CCUG 4940 / NBRC 14291 / NCTC 11154)</name>
    <name type="common">Bacteroides vulgatus</name>
    <dbReference type="NCBI Taxonomy" id="435590"/>
    <lineage>
        <taxon>Bacteria</taxon>
        <taxon>Pseudomonadati</taxon>
        <taxon>Bacteroidota</taxon>
        <taxon>Bacteroidia</taxon>
        <taxon>Bacteroidales</taxon>
        <taxon>Bacteroidaceae</taxon>
        <taxon>Phocaeicola</taxon>
    </lineage>
</organism>
<comment type="function">
    <text evidence="1">Catalyzes the NADPH-dependent rearrangement and reduction of 1-deoxy-D-xylulose-5-phosphate (DXP) to 2-C-methyl-D-erythritol 4-phosphate (MEP).</text>
</comment>
<comment type="catalytic activity">
    <reaction evidence="1">
        <text>2-C-methyl-D-erythritol 4-phosphate + NADP(+) = 1-deoxy-D-xylulose 5-phosphate + NADPH + H(+)</text>
        <dbReference type="Rhea" id="RHEA:13717"/>
        <dbReference type="ChEBI" id="CHEBI:15378"/>
        <dbReference type="ChEBI" id="CHEBI:57783"/>
        <dbReference type="ChEBI" id="CHEBI:57792"/>
        <dbReference type="ChEBI" id="CHEBI:58262"/>
        <dbReference type="ChEBI" id="CHEBI:58349"/>
        <dbReference type="EC" id="1.1.1.267"/>
    </reaction>
    <physiologicalReaction direction="right-to-left" evidence="1">
        <dbReference type="Rhea" id="RHEA:13719"/>
    </physiologicalReaction>
</comment>
<comment type="cofactor">
    <cofactor evidence="1">
        <name>Mg(2+)</name>
        <dbReference type="ChEBI" id="CHEBI:18420"/>
    </cofactor>
    <cofactor evidence="1">
        <name>Mn(2+)</name>
        <dbReference type="ChEBI" id="CHEBI:29035"/>
    </cofactor>
</comment>
<comment type="pathway">
    <text evidence="1">Isoprenoid biosynthesis; isopentenyl diphosphate biosynthesis via DXP pathway; isopentenyl diphosphate from 1-deoxy-D-xylulose 5-phosphate: step 1/6.</text>
</comment>
<comment type="similarity">
    <text evidence="1">Belongs to the DXR family.</text>
</comment>
<proteinExistence type="inferred from homology"/>
<evidence type="ECO:0000255" key="1">
    <source>
        <dbReference type="HAMAP-Rule" id="MF_00183"/>
    </source>
</evidence>
<feature type="chain" id="PRO_1000020217" description="1-deoxy-D-xylulose 5-phosphate reductoisomerase">
    <location>
        <begin position="1"/>
        <end position="382"/>
    </location>
</feature>
<feature type="binding site" evidence="1">
    <location>
        <position position="11"/>
    </location>
    <ligand>
        <name>NADPH</name>
        <dbReference type="ChEBI" id="CHEBI:57783"/>
    </ligand>
</feature>
<feature type="binding site" evidence="1">
    <location>
        <position position="12"/>
    </location>
    <ligand>
        <name>NADPH</name>
        <dbReference type="ChEBI" id="CHEBI:57783"/>
    </ligand>
</feature>
<feature type="binding site" evidence="1">
    <location>
        <position position="13"/>
    </location>
    <ligand>
        <name>NADPH</name>
        <dbReference type="ChEBI" id="CHEBI:57783"/>
    </ligand>
</feature>
<feature type="binding site" evidence="1">
    <location>
        <position position="14"/>
    </location>
    <ligand>
        <name>NADPH</name>
        <dbReference type="ChEBI" id="CHEBI:57783"/>
    </ligand>
</feature>
<feature type="binding site" evidence="1">
    <location>
        <position position="123"/>
    </location>
    <ligand>
        <name>NADPH</name>
        <dbReference type="ChEBI" id="CHEBI:57783"/>
    </ligand>
</feature>
<feature type="binding site" evidence="1">
    <location>
        <position position="124"/>
    </location>
    <ligand>
        <name>1-deoxy-D-xylulose 5-phosphate</name>
        <dbReference type="ChEBI" id="CHEBI:57792"/>
    </ligand>
</feature>
<feature type="binding site" evidence="1">
    <location>
        <position position="125"/>
    </location>
    <ligand>
        <name>NADPH</name>
        <dbReference type="ChEBI" id="CHEBI:57783"/>
    </ligand>
</feature>
<feature type="binding site" evidence="1">
    <location>
        <position position="149"/>
    </location>
    <ligand>
        <name>Mn(2+)</name>
        <dbReference type="ChEBI" id="CHEBI:29035"/>
    </ligand>
</feature>
<feature type="binding site" evidence="1">
    <location>
        <position position="150"/>
    </location>
    <ligand>
        <name>1-deoxy-D-xylulose 5-phosphate</name>
        <dbReference type="ChEBI" id="CHEBI:57792"/>
    </ligand>
</feature>
<feature type="binding site" evidence="1">
    <location>
        <position position="151"/>
    </location>
    <ligand>
        <name>1-deoxy-D-xylulose 5-phosphate</name>
        <dbReference type="ChEBI" id="CHEBI:57792"/>
    </ligand>
</feature>
<feature type="binding site" evidence="1">
    <location>
        <position position="151"/>
    </location>
    <ligand>
        <name>Mn(2+)</name>
        <dbReference type="ChEBI" id="CHEBI:29035"/>
    </ligand>
</feature>
<feature type="binding site" evidence="1">
    <location>
        <position position="173"/>
    </location>
    <ligand>
        <name>1-deoxy-D-xylulose 5-phosphate</name>
        <dbReference type="ChEBI" id="CHEBI:57792"/>
    </ligand>
</feature>
<feature type="binding site" evidence="1">
    <location>
        <position position="196"/>
    </location>
    <ligand>
        <name>1-deoxy-D-xylulose 5-phosphate</name>
        <dbReference type="ChEBI" id="CHEBI:57792"/>
    </ligand>
</feature>
<feature type="binding site" evidence="1">
    <location>
        <position position="202"/>
    </location>
    <ligand>
        <name>NADPH</name>
        <dbReference type="ChEBI" id="CHEBI:57783"/>
    </ligand>
</feature>
<feature type="binding site" evidence="1">
    <location>
        <position position="209"/>
    </location>
    <ligand>
        <name>1-deoxy-D-xylulose 5-phosphate</name>
        <dbReference type="ChEBI" id="CHEBI:57792"/>
    </ligand>
</feature>
<feature type="binding site" evidence="1">
    <location>
        <position position="214"/>
    </location>
    <ligand>
        <name>1-deoxy-D-xylulose 5-phosphate</name>
        <dbReference type="ChEBI" id="CHEBI:57792"/>
    </ligand>
</feature>
<feature type="binding site" evidence="1">
    <location>
        <position position="215"/>
    </location>
    <ligand>
        <name>1-deoxy-D-xylulose 5-phosphate</name>
        <dbReference type="ChEBI" id="CHEBI:57792"/>
    </ligand>
</feature>
<feature type="binding site" evidence="1">
    <location>
        <position position="218"/>
    </location>
    <ligand>
        <name>1-deoxy-D-xylulose 5-phosphate</name>
        <dbReference type="ChEBI" id="CHEBI:57792"/>
    </ligand>
</feature>
<feature type="binding site" evidence="1">
    <location>
        <position position="218"/>
    </location>
    <ligand>
        <name>Mn(2+)</name>
        <dbReference type="ChEBI" id="CHEBI:29035"/>
    </ligand>
</feature>
<gene>
    <name evidence="1" type="primary">dxr</name>
    <name type="ordered locus">BVU_1651</name>
</gene>